<evidence type="ECO:0000255" key="1">
    <source>
        <dbReference type="HAMAP-Rule" id="MF_01854"/>
    </source>
</evidence>
<proteinExistence type="inferred from homology"/>
<gene>
    <name evidence="1" type="primary">fbp</name>
    <name type="ordered locus">SAK_0666</name>
</gene>
<keyword id="KW-0119">Carbohydrate metabolism</keyword>
<keyword id="KW-0378">Hydrolase</keyword>
<keyword id="KW-0464">Manganese</keyword>
<accession>Q3K2F6</accession>
<reference key="1">
    <citation type="journal article" date="2005" name="Proc. Natl. Acad. Sci. U.S.A.">
        <title>Genome analysis of multiple pathogenic isolates of Streptococcus agalactiae: implications for the microbial 'pan-genome'.</title>
        <authorList>
            <person name="Tettelin H."/>
            <person name="Masignani V."/>
            <person name="Cieslewicz M.J."/>
            <person name="Donati C."/>
            <person name="Medini D."/>
            <person name="Ward N.L."/>
            <person name="Angiuoli S.V."/>
            <person name="Crabtree J."/>
            <person name="Jones A.L."/>
            <person name="Durkin A.S."/>
            <person name="DeBoy R.T."/>
            <person name="Davidsen T.M."/>
            <person name="Mora M."/>
            <person name="Scarselli M."/>
            <person name="Margarit y Ros I."/>
            <person name="Peterson J.D."/>
            <person name="Hauser C.R."/>
            <person name="Sundaram J.P."/>
            <person name="Nelson W.C."/>
            <person name="Madupu R."/>
            <person name="Brinkac L.M."/>
            <person name="Dodson R.J."/>
            <person name="Rosovitz M.J."/>
            <person name="Sullivan S.A."/>
            <person name="Daugherty S.C."/>
            <person name="Haft D.H."/>
            <person name="Selengut J."/>
            <person name="Gwinn M.L."/>
            <person name="Zhou L."/>
            <person name="Zafar N."/>
            <person name="Khouri H."/>
            <person name="Radune D."/>
            <person name="Dimitrov G."/>
            <person name="Watkins K."/>
            <person name="O'Connor K.J."/>
            <person name="Smith S."/>
            <person name="Utterback T.R."/>
            <person name="White O."/>
            <person name="Rubens C.E."/>
            <person name="Grandi G."/>
            <person name="Madoff L.C."/>
            <person name="Kasper D.L."/>
            <person name="Telford J.L."/>
            <person name="Wessels M.R."/>
            <person name="Rappuoli R."/>
            <person name="Fraser C.M."/>
        </authorList>
    </citation>
    <scope>NUCLEOTIDE SEQUENCE [LARGE SCALE GENOMIC DNA]</scope>
    <source>
        <strain>ATCC 27591 / A909 / CDC SS700</strain>
    </source>
</reference>
<feature type="chain" id="PRO_0000363112" description="Fructose-1,6-bisphosphatase class 3">
    <location>
        <begin position="1"/>
        <end position="643"/>
    </location>
</feature>
<sequence>MSNFYKLLKEKFPRKEDIVTEMINLEAICQLPKGTEYFISDLHGEYDAVDYLLRTGAGSIRAKLLDCFDWQKIVAVDLDDFCILLYYPKEKLAFDKMNLSASAYKTKLWEMIPLQIQVLKYFSSKYTKSKVRKQLSGKFAYIIEELLAEIDRNPEKKSYFDTIIEKLFELDQVEDLIIVLSQTIQVLIIDHLHVVGDIYDRGRYPDRILNRLMAFPNLDIQWGNHDVTWMGAASGSYLCMVNVIRIAARYNNITLIEDRYGINLRRLVDYSRRYYEPLPSFVPILDGEEMTHPDELDLLNMIQQATAILQFKLEAQLIDRRPEFQMHNRQLINQVNYKDLSISIKEVVHQLKDFNSRCIDSKNPSRLTSEEEELLQQLMIAFQTSESLKKHIDFLFEKGSMYLTYNDNLLFHGCIPMHSNGDFKSFKIAGKTYGGRDLLDLFESQIRLAYARPEKHDDLATDIIWYLWCGENSSLFGKNAMTTFERYYVSDKVTHQERKNPYFKLRDKDDICTALLQEFDLPKFGHIVNGHTPVKEKNGEQPIKANGKMLVIDGGFAKGYQKNTGLAGYTLIYNSYGIQLISHLPFTSIEEVLSGTNYIIDTKRLVEEAKDRILVKDTTIGQKLTKEIKDLDHLYRHFQEYDD</sequence>
<organism>
    <name type="scientific">Streptococcus agalactiae serotype Ia (strain ATCC 27591 / A909 / CDC SS700)</name>
    <dbReference type="NCBI Taxonomy" id="205921"/>
    <lineage>
        <taxon>Bacteria</taxon>
        <taxon>Bacillati</taxon>
        <taxon>Bacillota</taxon>
        <taxon>Bacilli</taxon>
        <taxon>Lactobacillales</taxon>
        <taxon>Streptococcaceae</taxon>
        <taxon>Streptococcus</taxon>
    </lineage>
</organism>
<dbReference type="EC" id="3.1.3.11" evidence="1"/>
<dbReference type="EMBL" id="CP000114">
    <property type="protein sequence ID" value="ABA46271.1"/>
    <property type="molecule type" value="Genomic_DNA"/>
</dbReference>
<dbReference type="RefSeq" id="WP_000064640.1">
    <property type="nucleotide sequence ID" value="NC_007432.1"/>
</dbReference>
<dbReference type="KEGG" id="sak:SAK_0666"/>
<dbReference type="HOGENOM" id="CLU_028392_2_0_9"/>
<dbReference type="UniPathway" id="UPA00138"/>
<dbReference type="GO" id="GO:0042132">
    <property type="term" value="F:fructose 1,6-bisphosphate 1-phosphatase activity"/>
    <property type="evidence" value="ECO:0007669"/>
    <property type="project" value="UniProtKB-UniRule"/>
</dbReference>
<dbReference type="GO" id="GO:0006094">
    <property type="term" value="P:gluconeogenesis"/>
    <property type="evidence" value="ECO:0007669"/>
    <property type="project" value="UniProtKB-UniRule"/>
</dbReference>
<dbReference type="Gene3D" id="3.60.21.10">
    <property type="match status" value="1"/>
</dbReference>
<dbReference type="HAMAP" id="MF_01854">
    <property type="entry name" value="FBPase_class3"/>
    <property type="match status" value="1"/>
</dbReference>
<dbReference type="InterPro" id="IPR009164">
    <property type="entry name" value="FBPtase_class3"/>
</dbReference>
<dbReference type="InterPro" id="IPR029052">
    <property type="entry name" value="Metallo-depent_PP-like"/>
</dbReference>
<dbReference type="Pfam" id="PF06874">
    <property type="entry name" value="FBPase_2"/>
    <property type="match status" value="1"/>
</dbReference>
<dbReference type="PIRSF" id="PIRSF000906">
    <property type="entry name" value="FBPtase_Bacill"/>
    <property type="match status" value="1"/>
</dbReference>
<dbReference type="SUPFAM" id="SSF56300">
    <property type="entry name" value="Metallo-dependent phosphatases"/>
    <property type="match status" value="1"/>
</dbReference>
<protein>
    <recommendedName>
        <fullName evidence="1">Fructose-1,6-bisphosphatase class 3</fullName>
        <shortName evidence="1">FBPase class 3</shortName>
        <ecNumber evidence="1">3.1.3.11</ecNumber>
    </recommendedName>
    <alternativeName>
        <fullName evidence="1">D-fructose-1,6-bisphosphate 1-phosphohydrolase class 3</fullName>
    </alternativeName>
</protein>
<name>F16PC_STRA1</name>
<comment type="catalytic activity">
    <reaction evidence="1">
        <text>beta-D-fructose 1,6-bisphosphate + H2O = beta-D-fructose 6-phosphate + phosphate</text>
        <dbReference type="Rhea" id="RHEA:11064"/>
        <dbReference type="ChEBI" id="CHEBI:15377"/>
        <dbReference type="ChEBI" id="CHEBI:32966"/>
        <dbReference type="ChEBI" id="CHEBI:43474"/>
        <dbReference type="ChEBI" id="CHEBI:57634"/>
        <dbReference type="EC" id="3.1.3.11"/>
    </reaction>
</comment>
<comment type="cofactor">
    <cofactor evidence="1">
        <name>Mn(2+)</name>
        <dbReference type="ChEBI" id="CHEBI:29035"/>
    </cofactor>
</comment>
<comment type="pathway">
    <text evidence="1">Carbohydrate biosynthesis; gluconeogenesis.</text>
</comment>
<comment type="similarity">
    <text evidence="1">Belongs to the FBPase class 3 family.</text>
</comment>